<organism>
    <name type="scientific">Rickettsia conorii (strain ATCC VR-613 / Malish 7)</name>
    <dbReference type="NCBI Taxonomy" id="272944"/>
    <lineage>
        <taxon>Bacteria</taxon>
        <taxon>Pseudomonadati</taxon>
        <taxon>Pseudomonadota</taxon>
        <taxon>Alphaproteobacteria</taxon>
        <taxon>Rickettsiales</taxon>
        <taxon>Rickettsiaceae</taxon>
        <taxon>Rickettsieae</taxon>
        <taxon>Rickettsia</taxon>
        <taxon>spotted fever group</taxon>
    </lineage>
</organism>
<comment type="function">
    <text evidence="1">Can catalyze the hydrolysis of ATP in the presence of single-stranded DNA, the ATP-dependent uptake of single-stranded DNA by duplex DNA, and the ATP-dependent hybridization of homologous single-stranded DNAs. It interacts with LexA causing its activation and leading to its autocatalytic cleavage.</text>
</comment>
<comment type="subcellular location">
    <subcellularLocation>
        <location evidence="1">Cytoplasm</location>
    </subcellularLocation>
</comment>
<comment type="similarity">
    <text evidence="1">Belongs to the RecA family.</text>
</comment>
<comment type="sequence caution" evidence="2">
    <conflict type="erroneous initiation">
        <sequence resource="EMBL-CDS" id="AAL03720"/>
    </conflict>
</comment>
<feature type="chain" id="PRO_0000122821" description="Protein RecA">
    <location>
        <begin position="1"/>
        <end position="343"/>
    </location>
</feature>
<feature type="binding site" evidence="1">
    <location>
        <begin position="66"/>
        <end position="73"/>
    </location>
    <ligand>
        <name>ATP</name>
        <dbReference type="ChEBI" id="CHEBI:30616"/>
    </ligand>
</feature>
<dbReference type="EMBL" id="AE006914">
    <property type="protein sequence ID" value="AAL03720.1"/>
    <property type="status" value="ALT_INIT"/>
    <property type="molecule type" value="Genomic_DNA"/>
</dbReference>
<dbReference type="PIR" id="F97847">
    <property type="entry name" value="F97847"/>
</dbReference>
<dbReference type="RefSeq" id="WP_014411056.1">
    <property type="nucleotide sequence ID" value="NC_003103.1"/>
</dbReference>
<dbReference type="SMR" id="Q92GE1"/>
<dbReference type="GeneID" id="928333"/>
<dbReference type="KEGG" id="rco:RC1182"/>
<dbReference type="HOGENOM" id="CLU_040469_3_2_5"/>
<dbReference type="Proteomes" id="UP000000816">
    <property type="component" value="Chromosome"/>
</dbReference>
<dbReference type="GO" id="GO:0005829">
    <property type="term" value="C:cytosol"/>
    <property type="evidence" value="ECO:0007669"/>
    <property type="project" value="TreeGrafter"/>
</dbReference>
<dbReference type="GO" id="GO:0005524">
    <property type="term" value="F:ATP binding"/>
    <property type="evidence" value="ECO:0007669"/>
    <property type="project" value="UniProtKB-UniRule"/>
</dbReference>
<dbReference type="GO" id="GO:0016887">
    <property type="term" value="F:ATP hydrolysis activity"/>
    <property type="evidence" value="ECO:0007669"/>
    <property type="project" value="InterPro"/>
</dbReference>
<dbReference type="GO" id="GO:0140664">
    <property type="term" value="F:ATP-dependent DNA damage sensor activity"/>
    <property type="evidence" value="ECO:0007669"/>
    <property type="project" value="InterPro"/>
</dbReference>
<dbReference type="GO" id="GO:0003684">
    <property type="term" value="F:damaged DNA binding"/>
    <property type="evidence" value="ECO:0007669"/>
    <property type="project" value="UniProtKB-UniRule"/>
</dbReference>
<dbReference type="GO" id="GO:0003697">
    <property type="term" value="F:single-stranded DNA binding"/>
    <property type="evidence" value="ECO:0007669"/>
    <property type="project" value="UniProtKB-UniRule"/>
</dbReference>
<dbReference type="GO" id="GO:0006310">
    <property type="term" value="P:DNA recombination"/>
    <property type="evidence" value="ECO:0007669"/>
    <property type="project" value="UniProtKB-UniRule"/>
</dbReference>
<dbReference type="GO" id="GO:0006281">
    <property type="term" value="P:DNA repair"/>
    <property type="evidence" value="ECO:0007669"/>
    <property type="project" value="UniProtKB-UniRule"/>
</dbReference>
<dbReference type="GO" id="GO:0009432">
    <property type="term" value="P:SOS response"/>
    <property type="evidence" value="ECO:0007669"/>
    <property type="project" value="UniProtKB-UniRule"/>
</dbReference>
<dbReference type="CDD" id="cd00983">
    <property type="entry name" value="RecA"/>
    <property type="match status" value="1"/>
</dbReference>
<dbReference type="FunFam" id="3.40.50.300:FF:000087">
    <property type="entry name" value="Recombinase RecA"/>
    <property type="match status" value="1"/>
</dbReference>
<dbReference type="Gene3D" id="3.40.50.300">
    <property type="entry name" value="P-loop containing nucleotide triphosphate hydrolases"/>
    <property type="match status" value="1"/>
</dbReference>
<dbReference type="HAMAP" id="MF_00268">
    <property type="entry name" value="RecA"/>
    <property type="match status" value="1"/>
</dbReference>
<dbReference type="InterPro" id="IPR003593">
    <property type="entry name" value="AAA+_ATPase"/>
</dbReference>
<dbReference type="InterPro" id="IPR013765">
    <property type="entry name" value="DNA_recomb/repair_RecA"/>
</dbReference>
<dbReference type="InterPro" id="IPR020584">
    <property type="entry name" value="DNA_recomb/repair_RecA_CS"/>
</dbReference>
<dbReference type="InterPro" id="IPR027417">
    <property type="entry name" value="P-loop_NTPase"/>
</dbReference>
<dbReference type="InterPro" id="IPR049261">
    <property type="entry name" value="RecA-like_C"/>
</dbReference>
<dbReference type="InterPro" id="IPR049428">
    <property type="entry name" value="RecA-like_N"/>
</dbReference>
<dbReference type="InterPro" id="IPR020588">
    <property type="entry name" value="RecA_ATP-bd"/>
</dbReference>
<dbReference type="InterPro" id="IPR023400">
    <property type="entry name" value="RecA_C_sf"/>
</dbReference>
<dbReference type="InterPro" id="IPR020587">
    <property type="entry name" value="RecA_monomer-monomer_interface"/>
</dbReference>
<dbReference type="NCBIfam" id="TIGR02012">
    <property type="entry name" value="tigrfam_recA"/>
    <property type="match status" value="1"/>
</dbReference>
<dbReference type="PANTHER" id="PTHR45900:SF1">
    <property type="entry name" value="MITOCHONDRIAL DNA REPAIR PROTEIN RECA HOMOLOG-RELATED"/>
    <property type="match status" value="1"/>
</dbReference>
<dbReference type="PANTHER" id="PTHR45900">
    <property type="entry name" value="RECA"/>
    <property type="match status" value="1"/>
</dbReference>
<dbReference type="Pfam" id="PF00154">
    <property type="entry name" value="RecA"/>
    <property type="match status" value="1"/>
</dbReference>
<dbReference type="Pfam" id="PF21096">
    <property type="entry name" value="RecA_C"/>
    <property type="match status" value="1"/>
</dbReference>
<dbReference type="PRINTS" id="PR00142">
    <property type="entry name" value="RECA"/>
</dbReference>
<dbReference type="SMART" id="SM00382">
    <property type="entry name" value="AAA"/>
    <property type="match status" value="1"/>
</dbReference>
<dbReference type="SUPFAM" id="SSF52540">
    <property type="entry name" value="P-loop containing nucleoside triphosphate hydrolases"/>
    <property type="match status" value="1"/>
</dbReference>
<dbReference type="SUPFAM" id="SSF54752">
    <property type="entry name" value="RecA protein, C-terminal domain"/>
    <property type="match status" value="1"/>
</dbReference>
<dbReference type="PROSITE" id="PS00321">
    <property type="entry name" value="RECA_1"/>
    <property type="match status" value="1"/>
</dbReference>
<dbReference type="PROSITE" id="PS50162">
    <property type="entry name" value="RECA_2"/>
    <property type="match status" value="1"/>
</dbReference>
<dbReference type="PROSITE" id="PS50163">
    <property type="entry name" value="RECA_3"/>
    <property type="match status" value="1"/>
</dbReference>
<gene>
    <name evidence="1" type="primary">recA</name>
    <name type="ordered locus">RC1182</name>
</gene>
<accession>Q92GE1</accession>
<evidence type="ECO:0000255" key="1">
    <source>
        <dbReference type="HAMAP-Rule" id="MF_00268"/>
    </source>
</evidence>
<evidence type="ECO:0000305" key="2"/>
<name>RECA_RICCN</name>
<keyword id="KW-0067">ATP-binding</keyword>
<keyword id="KW-0963">Cytoplasm</keyword>
<keyword id="KW-0227">DNA damage</keyword>
<keyword id="KW-0233">DNA recombination</keyword>
<keyword id="KW-0234">DNA repair</keyword>
<keyword id="KW-0238">DNA-binding</keyword>
<keyword id="KW-0547">Nucleotide-binding</keyword>
<keyword id="KW-0742">SOS response</keyword>
<reference key="1">
    <citation type="journal article" date="2001" name="Science">
        <title>Mechanisms of evolution in Rickettsia conorii and R. prowazekii.</title>
        <authorList>
            <person name="Ogata H."/>
            <person name="Audic S."/>
            <person name="Renesto-Audiffren P."/>
            <person name="Fournier P.-E."/>
            <person name="Barbe V."/>
            <person name="Samson D."/>
            <person name="Roux V."/>
            <person name="Cossart P."/>
            <person name="Weissenbach J."/>
            <person name="Claverie J.-M."/>
            <person name="Raoult D."/>
        </authorList>
    </citation>
    <scope>NUCLEOTIDE SEQUENCE [LARGE SCALE GENOMIC DNA]</scope>
    <source>
        <strain>ATCC VR-613 / Malish 7</strain>
    </source>
</reference>
<protein>
    <recommendedName>
        <fullName evidence="1">Protein RecA</fullName>
    </recommendedName>
    <alternativeName>
        <fullName evidence="1">Recombinase A</fullName>
    </alternativeName>
</protein>
<sequence length="343" mass="37250">MSNTDKERAIAAALAQIEKSYGKGSVMKLGQRPHVDIEAVSTGSLGLDIALGIGGVPKGRIIEIFGPESSGKTTLTLHLIAEAQKKGGTCAFIDAEHALDPAYAKKLGVNIDELIISQPDTGEQALEIADTLIRSSGIDMIIIDSVAALVPKSEIEGEMGDAQMASQARLMSQALRKLTASINRTNCITVFINQIRMKIGVMFGSPETTTGGNALKFYASVRIDIRRIGSIKDKEEVIGSQTKVKVVKNKVSPPFKTADFDIMYGSGISKEGEIIDLGVKLDIVEKSGSWFSYKNVRIGQGRENVKQYLKEHPQISNEIEKIIREKSSKITNINLDQTEEEND</sequence>
<proteinExistence type="inferred from homology"/>